<protein>
    <recommendedName>
        <fullName>Methionine--tRNA ligase</fullName>
        <ecNumber>6.1.1.10</ecNumber>
    </recommendedName>
    <alternativeName>
        <fullName>Methionyl-tRNA synthetase</fullName>
        <shortName>MetRS</shortName>
    </alternativeName>
</protein>
<feature type="chain" id="PRO_0000139182" description="Methionine--tRNA ligase">
    <location>
        <begin position="1"/>
        <end position="572"/>
    </location>
</feature>
<feature type="short sequence motif" description="'HIGH' region">
    <location>
        <begin position="11"/>
        <end position="21"/>
    </location>
</feature>
<feature type="short sequence motif" description="'KMSKS' region">
    <location>
        <begin position="334"/>
        <end position="338"/>
    </location>
</feature>
<feature type="binding site" evidence="1">
    <location>
        <position position="143"/>
    </location>
    <ligand>
        <name>Zn(2+)</name>
        <dbReference type="ChEBI" id="CHEBI:29105"/>
    </ligand>
</feature>
<feature type="binding site" evidence="1">
    <location>
        <position position="146"/>
    </location>
    <ligand>
        <name>Zn(2+)</name>
        <dbReference type="ChEBI" id="CHEBI:29105"/>
    </ligand>
</feature>
<feature type="binding site" evidence="1">
    <location>
        <position position="156"/>
    </location>
    <ligand>
        <name>Zn(2+)</name>
        <dbReference type="ChEBI" id="CHEBI:29105"/>
    </ligand>
</feature>
<feature type="binding site" evidence="1">
    <location>
        <position position="159"/>
    </location>
    <ligand>
        <name>Zn(2+)</name>
        <dbReference type="ChEBI" id="CHEBI:29105"/>
    </ligand>
</feature>
<feature type="binding site" evidence="1">
    <location>
        <position position="337"/>
    </location>
    <ligand>
        <name>ATP</name>
        <dbReference type="ChEBI" id="CHEBI:30616"/>
    </ligand>
</feature>
<name>SYM_AERPE</name>
<evidence type="ECO:0000250" key="1"/>
<evidence type="ECO:0000305" key="2"/>
<accession>Q9YCY3</accession>
<reference key="1">
    <citation type="journal article" date="1999" name="DNA Res.">
        <title>Complete genome sequence of an aerobic hyper-thermophilic crenarchaeon, Aeropyrum pernix K1.</title>
        <authorList>
            <person name="Kawarabayasi Y."/>
            <person name="Hino Y."/>
            <person name="Horikawa H."/>
            <person name="Yamazaki S."/>
            <person name="Haikawa Y."/>
            <person name="Jin-no K."/>
            <person name="Takahashi M."/>
            <person name="Sekine M."/>
            <person name="Baba S."/>
            <person name="Ankai A."/>
            <person name="Kosugi H."/>
            <person name="Hosoyama A."/>
            <person name="Fukui S."/>
            <person name="Nagai Y."/>
            <person name="Nishijima K."/>
            <person name="Nakazawa H."/>
            <person name="Takamiya M."/>
            <person name="Masuda S."/>
            <person name="Funahashi T."/>
            <person name="Tanaka T."/>
            <person name="Kudoh Y."/>
            <person name="Yamazaki J."/>
            <person name="Kushida N."/>
            <person name="Oguchi A."/>
            <person name="Aoki K."/>
            <person name="Kubota K."/>
            <person name="Nakamura Y."/>
            <person name="Nomura N."/>
            <person name="Sako Y."/>
            <person name="Kikuchi H."/>
        </authorList>
    </citation>
    <scope>NUCLEOTIDE SEQUENCE [LARGE SCALE GENOMIC DNA]</scope>
    <source>
        <strain>ATCC 700893 / DSM 11879 / JCM 9820 / NBRC 100138 / K1</strain>
    </source>
</reference>
<keyword id="KW-0030">Aminoacyl-tRNA synthetase</keyword>
<keyword id="KW-0067">ATP-binding</keyword>
<keyword id="KW-0963">Cytoplasm</keyword>
<keyword id="KW-0436">Ligase</keyword>
<keyword id="KW-0479">Metal-binding</keyword>
<keyword id="KW-0547">Nucleotide-binding</keyword>
<keyword id="KW-0648">Protein biosynthesis</keyword>
<keyword id="KW-1185">Reference proteome</keyword>
<keyword id="KW-0862">Zinc</keyword>
<sequence length="572" mass="66481">MAKYVVTSAWPYVNHVPHLGTLIGSVLSADIYARYLRLRGRQVVFVSGSDEHGTPIELEARKKGVHPKELTDQVHEYDVKMWREYRISFDNYSRTESPVHKEFVMEFMKKLEENGYIFSQEEVLPYCERDKIFLPDRFVEGTCPYCGYEKARGDQCDECGRLLHPTELKNPRCALCGSKPVYKSTRHWFIDLRRVQDRLLKWLESHGELQDSVKKYSINWVAQGLKPRSVTRDLSWGVPAPFKGAEGKTIYVWFDALLGYVSATKELFIMRRGDPEEWKSWWWDSGTRTVYFIGKDNIPFHAIILPALFLASHDPYVLPWRISATEYLMYEGQQFSKSRRIGVWIDEALEIAPADYWRWALARMRPEARDTNFTWKEFYRIVNTELNDDIGNFVNRVLSLVRSRMSGVAPEPEDLGEHQGFVERVRRAAWAVAEDLEAIRIKRATEGILEIAREGNAYLNRTQPWKLLSQDREEGVRALSAALYAVKTLAHLLAPFTPDAADRLWSMLGLAGSVHEAVWDEWLDRPLPGGARIVRVEPLFQKLPDDFLERVDEIVEDARRRAREKRPPLLRD</sequence>
<organism>
    <name type="scientific">Aeropyrum pernix (strain ATCC 700893 / DSM 11879 / JCM 9820 / NBRC 100138 / K1)</name>
    <dbReference type="NCBI Taxonomy" id="272557"/>
    <lineage>
        <taxon>Archaea</taxon>
        <taxon>Thermoproteota</taxon>
        <taxon>Thermoprotei</taxon>
        <taxon>Desulfurococcales</taxon>
        <taxon>Desulfurococcaceae</taxon>
        <taxon>Aeropyrum</taxon>
    </lineage>
</organism>
<comment type="function">
    <text evidence="1">Is required not only for elongation of protein synthesis but also for the initiation of all mRNA translation through initiator tRNA(fMet) aminoacylation.</text>
</comment>
<comment type="catalytic activity">
    <reaction>
        <text>tRNA(Met) + L-methionine + ATP = L-methionyl-tRNA(Met) + AMP + diphosphate</text>
        <dbReference type="Rhea" id="RHEA:13481"/>
        <dbReference type="Rhea" id="RHEA-COMP:9667"/>
        <dbReference type="Rhea" id="RHEA-COMP:9698"/>
        <dbReference type="ChEBI" id="CHEBI:30616"/>
        <dbReference type="ChEBI" id="CHEBI:33019"/>
        <dbReference type="ChEBI" id="CHEBI:57844"/>
        <dbReference type="ChEBI" id="CHEBI:78442"/>
        <dbReference type="ChEBI" id="CHEBI:78530"/>
        <dbReference type="ChEBI" id="CHEBI:456215"/>
        <dbReference type="EC" id="6.1.1.10"/>
    </reaction>
</comment>
<comment type="cofactor">
    <cofactor evidence="1">
        <name>Zn(2+)</name>
        <dbReference type="ChEBI" id="CHEBI:29105"/>
    </cofactor>
    <text evidence="1">Binds 1 zinc ion per subunit.</text>
</comment>
<comment type="subcellular location">
    <subcellularLocation>
        <location evidence="1">Cytoplasm</location>
    </subcellularLocation>
</comment>
<comment type="similarity">
    <text evidence="2">Belongs to the class-I aminoacyl-tRNA synthetase family. MetG type 1 subfamily.</text>
</comment>
<gene>
    <name type="primary">metG</name>
    <name type="ordered locus">APE_1129</name>
</gene>
<proteinExistence type="inferred from homology"/>
<dbReference type="EC" id="6.1.1.10"/>
<dbReference type="EMBL" id="BA000002">
    <property type="protein sequence ID" value="BAA80114.1"/>
    <property type="molecule type" value="Genomic_DNA"/>
</dbReference>
<dbReference type="PIR" id="B72714">
    <property type="entry name" value="B72714"/>
</dbReference>
<dbReference type="RefSeq" id="WP_010866182.1">
    <property type="nucleotide sequence ID" value="NC_000854.2"/>
</dbReference>
<dbReference type="SMR" id="Q9YCY3"/>
<dbReference type="STRING" id="272557.APE_1129"/>
<dbReference type="EnsemblBacteria" id="BAA80114">
    <property type="protein sequence ID" value="BAA80114"/>
    <property type="gene ID" value="APE_1129"/>
</dbReference>
<dbReference type="GeneID" id="1445805"/>
<dbReference type="KEGG" id="ape:APE_1129"/>
<dbReference type="PATRIC" id="fig|272557.25.peg.781"/>
<dbReference type="eggNOG" id="arCOG00810">
    <property type="taxonomic scope" value="Archaea"/>
</dbReference>
<dbReference type="Proteomes" id="UP000002518">
    <property type="component" value="Chromosome"/>
</dbReference>
<dbReference type="GO" id="GO:0017101">
    <property type="term" value="C:aminoacyl-tRNA synthetase multienzyme complex"/>
    <property type="evidence" value="ECO:0007669"/>
    <property type="project" value="TreeGrafter"/>
</dbReference>
<dbReference type="GO" id="GO:0005829">
    <property type="term" value="C:cytosol"/>
    <property type="evidence" value="ECO:0007669"/>
    <property type="project" value="TreeGrafter"/>
</dbReference>
<dbReference type="GO" id="GO:0005524">
    <property type="term" value="F:ATP binding"/>
    <property type="evidence" value="ECO:0007669"/>
    <property type="project" value="UniProtKB-UniRule"/>
</dbReference>
<dbReference type="GO" id="GO:0046872">
    <property type="term" value="F:metal ion binding"/>
    <property type="evidence" value="ECO:0007669"/>
    <property type="project" value="UniProtKB-KW"/>
</dbReference>
<dbReference type="GO" id="GO:0004825">
    <property type="term" value="F:methionine-tRNA ligase activity"/>
    <property type="evidence" value="ECO:0007669"/>
    <property type="project" value="UniProtKB-UniRule"/>
</dbReference>
<dbReference type="GO" id="GO:0006431">
    <property type="term" value="P:methionyl-tRNA aminoacylation"/>
    <property type="evidence" value="ECO:0007669"/>
    <property type="project" value="UniProtKB-UniRule"/>
</dbReference>
<dbReference type="CDD" id="cd07957">
    <property type="entry name" value="Anticodon_Ia_Met"/>
    <property type="match status" value="1"/>
</dbReference>
<dbReference type="CDD" id="cd00814">
    <property type="entry name" value="MetRS_core"/>
    <property type="match status" value="1"/>
</dbReference>
<dbReference type="FunFam" id="2.20.28.20:FF:000001">
    <property type="entry name" value="Methionine--tRNA ligase"/>
    <property type="match status" value="1"/>
</dbReference>
<dbReference type="Gene3D" id="3.40.50.620">
    <property type="entry name" value="HUPs"/>
    <property type="match status" value="1"/>
</dbReference>
<dbReference type="Gene3D" id="1.10.730.10">
    <property type="entry name" value="Isoleucyl-tRNA Synthetase, Domain 1"/>
    <property type="match status" value="1"/>
</dbReference>
<dbReference type="Gene3D" id="2.20.28.20">
    <property type="entry name" value="Methionyl-tRNA synthetase, Zn-domain"/>
    <property type="match status" value="1"/>
</dbReference>
<dbReference type="HAMAP" id="MF_00098">
    <property type="entry name" value="Met_tRNA_synth_type1"/>
    <property type="match status" value="1"/>
</dbReference>
<dbReference type="InterPro" id="IPR041872">
    <property type="entry name" value="Anticodon_Met"/>
</dbReference>
<dbReference type="InterPro" id="IPR023458">
    <property type="entry name" value="Met-tRNA_ligase_1"/>
</dbReference>
<dbReference type="InterPro" id="IPR014758">
    <property type="entry name" value="Met-tRNA_synth"/>
</dbReference>
<dbReference type="InterPro" id="IPR015413">
    <property type="entry name" value="Methionyl/Leucyl_tRNA_Synth"/>
</dbReference>
<dbReference type="InterPro" id="IPR033911">
    <property type="entry name" value="MetRS_core"/>
</dbReference>
<dbReference type="InterPro" id="IPR029038">
    <property type="entry name" value="MetRS_Zn"/>
</dbReference>
<dbReference type="InterPro" id="IPR014729">
    <property type="entry name" value="Rossmann-like_a/b/a_fold"/>
</dbReference>
<dbReference type="InterPro" id="IPR009080">
    <property type="entry name" value="tRNAsynth_Ia_anticodon-bd"/>
</dbReference>
<dbReference type="NCBIfam" id="TIGR00398">
    <property type="entry name" value="metG"/>
    <property type="match status" value="1"/>
</dbReference>
<dbReference type="PANTHER" id="PTHR45765">
    <property type="entry name" value="METHIONINE--TRNA LIGASE"/>
    <property type="match status" value="1"/>
</dbReference>
<dbReference type="PANTHER" id="PTHR45765:SF1">
    <property type="entry name" value="METHIONINE--TRNA LIGASE, CYTOPLASMIC"/>
    <property type="match status" value="1"/>
</dbReference>
<dbReference type="Pfam" id="PF19303">
    <property type="entry name" value="Anticodon_3"/>
    <property type="match status" value="1"/>
</dbReference>
<dbReference type="Pfam" id="PF09334">
    <property type="entry name" value="tRNA-synt_1g"/>
    <property type="match status" value="1"/>
</dbReference>
<dbReference type="PRINTS" id="PR01041">
    <property type="entry name" value="TRNASYNTHMET"/>
</dbReference>
<dbReference type="SUPFAM" id="SSF47323">
    <property type="entry name" value="Anticodon-binding domain of a subclass of class I aminoacyl-tRNA synthetases"/>
    <property type="match status" value="1"/>
</dbReference>
<dbReference type="SUPFAM" id="SSF57770">
    <property type="entry name" value="Methionyl-tRNA synthetase (MetRS), Zn-domain"/>
    <property type="match status" value="1"/>
</dbReference>
<dbReference type="SUPFAM" id="SSF52374">
    <property type="entry name" value="Nucleotidylyl transferase"/>
    <property type="match status" value="1"/>
</dbReference>